<protein>
    <recommendedName>
        <fullName>Putative uncharacterized protein DDB_G0271896</fullName>
    </recommendedName>
</protein>
<feature type="chain" id="PRO_0000348164" description="Putative uncharacterized protein DDB_G0271896">
    <location>
        <begin position="1"/>
        <end position="87"/>
    </location>
</feature>
<proteinExistence type="predicted"/>
<keyword id="KW-1185">Reference proteome</keyword>
<dbReference type="EMBL" id="AAFI02000007">
    <property type="protein sequence ID" value="EAL71472.1"/>
    <property type="molecule type" value="Genomic_DNA"/>
</dbReference>
<dbReference type="RefSeq" id="XP_645403.1">
    <property type="nucleotide sequence ID" value="XM_640311.1"/>
</dbReference>
<dbReference type="PaxDb" id="44689-DDB0266542"/>
<dbReference type="EnsemblProtists" id="EAL71472">
    <property type="protein sequence ID" value="EAL71472"/>
    <property type="gene ID" value="DDB_G0271896"/>
</dbReference>
<dbReference type="GeneID" id="8618217"/>
<dbReference type="KEGG" id="ddi:DDB_G0271896"/>
<dbReference type="dictyBase" id="DDB_G0271896"/>
<dbReference type="HOGENOM" id="CLU_2488095_0_0_1"/>
<dbReference type="InParanoid" id="Q86I85"/>
<dbReference type="PRO" id="PR:Q86I85"/>
<dbReference type="Proteomes" id="UP000002195">
    <property type="component" value="Chromosome 2"/>
</dbReference>
<dbReference type="InterPro" id="IPR008455">
    <property type="entry name" value="HssA/B-related"/>
</dbReference>
<dbReference type="Pfam" id="PF05710">
    <property type="entry name" value="Coiled"/>
    <property type="match status" value="1"/>
</dbReference>
<gene>
    <name type="ORF">DDB_G0271896</name>
</gene>
<organism>
    <name type="scientific">Dictyostelium discoideum</name>
    <name type="common">Social amoeba</name>
    <dbReference type="NCBI Taxonomy" id="44689"/>
    <lineage>
        <taxon>Eukaryota</taxon>
        <taxon>Amoebozoa</taxon>
        <taxon>Evosea</taxon>
        <taxon>Eumycetozoa</taxon>
        <taxon>Dictyostelia</taxon>
        <taxon>Dictyosteliales</taxon>
        <taxon>Dictyosteliaceae</taxon>
        <taxon>Dictyostelium</taxon>
    </lineage>
</organism>
<accession>Q86I85</accession>
<accession>Q55AF1</accession>
<sequence>MAILASICSIGNIKTNSSKLIINNISSQSSNMNYNIIQCNGPMSNSSGCGNSTGPIVGGVIINRGAVSGVLCIVGGVVNGLVGGGCN</sequence>
<name>Y8566_DICDI</name>
<reference key="1">
    <citation type="journal article" date="2002" name="Nature">
        <title>Sequence and analysis of chromosome 2 of Dictyostelium discoideum.</title>
        <authorList>
            <person name="Gloeckner G."/>
            <person name="Eichinger L."/>
            <person name="Szafranski K."/>
            <person name="Pachebat J.A."/>
            <person name="Bankier A.T."/>
            <person name="Dear P.H."/>
            <person name="Lehmann R."/>
            <person name="Baumgart C."/>
            <person name="Parra G."/>
            <person name="Abril J.F."/>
            <person name="Guigo R."/>
            <person name="Kumpf K."/>
            <person name="Tunggal B."/>
            <person name="Cox E.C."/>
            <person name="Quail M.A."/>
            <person name="Platzer M."/>
            <person name="Rosenthal A."/>
            <person name="Noegel A.A."/>
        </authorList>
    </citation>
    <scope>NUCLEOTIDE SEQUENCE [LARGE SCALE GENOMIC DNA]</scope>
    <source>
        <strain>AX4</strain>
    </source>
</reference>
<reference key="2">
    <citation type="journal article" date="2005" name="Nature">
        <title>The genome of the social amoeba Dictyostelium discoideum.</title>
        <authorList>
            <person name="Eichinger L."/>
            <person name="Pachebat J.A."/>
            <person name="Gloeckner G."/>
            <person name="Rajandream M.A."/>
            <person name="Sucgang R."/>
            <person name="Berriman M."/>
            <person name="Song J."/>
            <person name="Olsen R."/>
            <person name="Szafranski K."/>
            <person name="Xu Q."/>
            <person name="Tunggal B."/>
            <person name="Kummerfeld S."/>
            <person name="Madera M."/>
            <person name="Konfortov B.A."/>
            <person name="Rivero F."/>
            <person name="Bankier A.T."/>
            <person name="Lehmann R."/>
            <person name="Hamlin N."/>
            <person name="Davies R."/>
            <person name="Gaudet P."/>
            <person name="Fey P."/>
            <person name="Pilcher K."/>
            <person name="Chen G."/>
            <person name="Saunders D."/>
            <person name="Sodergren E.J."/>
            <person name="Davis P."/>
            <person name="Kerhornou A."/>
            <person name="Nie X."/>
            <person name="Hall N."/>
            <person name="Anjard C."/>
            <person name="Hemphill L."/>
            <person name="Bason N."/>
            <person name="Farbrother P."/>
            <person name="Desany B."/>
            <person name="Just E."/>
            <person name="Morio T."/>
            <person name="Rost R."/>
            <person name="Churcher C.M."/>
            <person name="Cooper J."/>
            <person name="Haydock S."/>
            <person name="van Driessche N."/>
            <person name="Cronin A."/>
            <person name="Goodhead I."/>
            <person name="Muzny D.M."/>
            <person name="Mourier T."/>
            <person name="Pain A."/>
            <person name="Lu M."/>
            <person name="Harper D."/>
            <person name="Lindsay R."/>
            <person name="Hauser H."/>
            <person name="James K.D."/>
            <person name="Quiles M."/>
            <person name="Madan Babu M."/>
            <person name="Saito T."/>
            <person name="Buchrieser C."/>
            <person name="Wardroper A."/>
            <person name="Felder M."/>
            <person name="Thangavelu M."/>
            <person name="Johnson D."/>
            <person name="Knights A."/>
            <person name="Loulseged H."/>
            <person name="Mungall K.L."/>
            <person name="Oliver K."/>
            <person name="Price C."/>
            <person name="Quail M.A."/>
            <person name="Urushihara H."/>
            <person name="Hernandez J."/>
            <person name="Rabbinowitsch E."/>
            <person name="Steffen D."/>
            <person name="Sanders M."/>
            <person name="Ma J."/>
            <person name="Kohara Y."/>
            <person name="Sharp S."/>
            <person name="Simmonds M.N."/>
            <person name="Spiegler S."/>
            <person name="Tivey A."/>
            <person name="Sugano S."/>
            <person name="White B."/>
            <person name="Walker D."/>
            <person name="Woodward J.R."/>
            <person name="Winckler T."/>
            <person name="Tanaka Y."/>
            <person name="Shaulsky G."/>
            <person name="Schleicher M."/>
            <person name="Weinstock G.M."/>
            <person name="Rosenthal A."/>
            <person name="Cox E.C."/>
            <person name="Chisholm R.L."/>
            <person name="Gibbs R.A."/>
            <person name="Loomis W.F."/>
            <person name="Platzer M."/>
            <person name="Kay R.R."/>
            <person name="Williams J.G."/>
            <person name="Dear P.H."/>
            <person name="Noegel A.A."/>
            <person name="Barrell B.G."/>
            <person name="Kuspa A."/>
        </authorList>
    </citation>
    <scope>NUCLEOTIDE SEQUENCE [LARGE SCALE GENOMIC DNA]</scope>
    <source>
        <strain>AX4</strain>
    </source>
</reference>